<organism>
    <name type="scientific">Escherichia coli O45:K1 (strain S88 / ExPEC)</name>
    <dbReference type="NCBI Taxonomy" id="585035"/>
    <lineage>
        <taxon>Bacteria</taxon>
        <taxon>Pseudomonadati</taxon>
        <taxon>Pseudomonadota</taxon>
        <taxon>Gammaproteobacteria</taxon>
        <taxon>Enterobacterales</taxon>
        <taxon>Enterobacteriaceae</taxon>
        <taxon>Escherichia</taxon>
    </lineage>
</organism>
<reference key="1">
    <citation type="journal article" date="2009" name="PLoS Genet.">
        <title>Organised genome dynamics in the Escherichia coli species results in highly diverse adaptive paths.</title>
        <authorList>
            <person name="Touchon M."/>
            <person name="Hoede C."/>
            <person name="Tenaillon O."/>
            <person name="Barbe V."/>
            <person name="Baeriswyl S."/>
            <person name="Bidet P."/>
            <person name="Bingen E."/>
            <person name="Bonacorsi S."/>
            <person name="Bouchier C."/>
            <person name="Bouvet O."/>
            <person name="Calteau A."/>
            <person name="Chiapello H."/>
            <person name="Clermont O."/>
            <person name="Cruveiller S."/>
            <person name="Danchin A."/>
            <person name="Diard M."/>
            <person name="Dossat C."/>
            <person name="Karoui M.E."/>
            <person name="Frapy E."/>
            <person name="Garry L."/>
            <person name="Ghigo J.M."/>
            <person name="Gilles A.M."/>
            <person name="Johnson J."/>
            <person name="Le Bouguenec C."/>
            <person name="Lescat M."/>
            <person name="Mangenot S."/>
            <person name="Martinez-Jehanne V."/>
            <person name="Matic I."/>
            <person name="Nassif X."/>
            <person name="Oztas S."/>
            <person name="Petit M.A."/>
            <person name="Pichon C."/>
            <person name="Rouy Z."/>
            <person name="Ruf C.S."/>
            <person name="Schneider D."/>
            <person name="Tourret J."/>
            <person name="Vacherie B."/>
            <person name="Vallenet D."/>
            <person name="Medigue C."/>
            <person name="Rocha E.P.C."/>
            <person name="Denamur E."/>
        </authorList>
    </citation>
    <scope>NUCLEOTIDE SEQUENCE [LARGE SCALE GENOMIC DNA]</scope>
    <source>
        <strain>S88 / ExPEC</strain>
    </source>
</reference>
<name>COAA_ECO45</name>
<comment type="catalytic activity">
    <reaction evidence="1">
        <text>(R)-pantothenate + ATP = (R)-4'-phosphopantothenate + ADP + H(+)</text>
        <dbReference type="Rhea" id="RHEA:16373"/>
        <dbReference type="ChEBI" id="CHEBI:10986"/>
        <dbReference type="ChEBI" id="CHEBI:15378"/>
        <dbReference type="ChEBI" id="CHEBI:29032"/>
        <dbReference type="ChEBI" id="CHEBI:30616"/>
        <dbReference type="ChEBI" id="CHEBI:456216"/>
        <dbReference type="EC" id="2.7.1.33"/>
    </reaction>
</comment>
<comment type="pathway">
    <text evidence="1">Cofactor biosynthesis; coenzyme A biosynthesis; CoA from (R)-pantothenate: step 1/5.</text>
</comment>
<comment type="subcellular location">
    <subcellularLocation>
        <location evidence="1">Cytoplasm</location>
    </subcellularLocation>
</comment>
<comment type="similarity">
    <text evidence="1">Belongs to the prokaryotic pantothenate kinase family.</text>
</comment>
<protein>
    <recommendedName>
        <fullName evidence="1">Pantothenate kinase</fullName>
        <ecNumber evidence="1">2.7.1.33</ecNumber>
    </recommendedName>
    <alternativeName>
        <fullName evidence="1">Pantothenic acid kinase</fullName>
    </alternativeName>
</protein>
<accession>B7MIW5</accession>
<evidence type="ECO:0000255" key="1">
    <source>
        <dbReference type="HAMAP-Rule" id="MF_00215"/>
    </source>
</evidence>
<keyword id="KW-0067">ATP-binding</keyword>
<keyword id="KW-0173">Coenzyme A biosynthesis</keyword>
<keyword id="KW-0963">Cytoplasm</keyword>
<keyword id="KW-0418">Kinase</keyword>
<keyword id="KW-0547">Nucleotide-binding</keyword>
<keyword id="KW-1185">Reference proteome</keyword>
<keyword id="KW-0808">Transferase</keyword>
<proteinExistence type="inferred from homology"/>
<dbReference type="EC" id="2.7.1.33" evidence="1"/>
<dbReference type="EMBL" id="CU928161">
    <property type="protein sequence ID" value="CAR05608.1"/>
    <property type="molecule type" value="Genomic_DNA"/>
</dbReference>
<dbReference type="RefSeq" id="WP_000023081.1">
    <property type="nucleotide sequence ID" value="NC_011742.1"/>
</dbReference>
<dbReference type="SMR" id="B7MIW5"/>
<dbReference type="GeneID" id="93777919"/>
<dbReference type="KEGG" id="ecz:ECS88_4438"/>
<dbReference type="HOGENOM" id="CLU_053818_1_1_6"/>
<dbReference type="UniPathway" id="UPA00241">
    <property type="reaction ID" value="UER00352"/>
</dbReference>
<dbReference type="Proteomes" id="UP000000747">
    <property type="component" value="Chromosome"/>
</dbReference>
<dbReference type="GO" id="GO:0005737">
    <property type="term" value="C:cytoplasm"/>
    <property type="evidence" value="ECO:0007669"/>
    <property type="project" value="UniProtKB-SubCell"/>
</dbReference>
<dbReference type="GO" id="GO:0005524">
    <property type="term" value="F:ATP binding"/>
    <property type="evidence" value="ECO:0007669"/>
    <property type="project" value="UniProtKB-UniRule"/>
</dbReference>
<dbReference type="GO" id="GO:0004594">
    <property type="term" value="F:pantothenate kinase activity"/>
    <property type="evidence" value="ECO:0007669"/>
    <property type="project" value="UniProtKB-UniRule"/>
</dbReference>
<dbReference type="GO" id="GO:0015937">
    <property type="term" value="P:coenzyme A biosynthetic process"/>
    <property type="evidence" value="ECO:0007669"/>
    <property type="project" value="UniProtKB-UniRule"/>
</dbReference>
<dbReference type="CDD" id="cd02025">
    <property type="entry name" value="PanK"/>
    <property type="match status" value="1"/>
</dbReference>
<dbReference type="FunFam" id="3.40.50.300:FF:000242">
    <property type="entry name" value="Pantothenate kinase"/>
    <property type="match status" value="1"/>
</dbReference>
<dbReference type="Gene3D" id="3.40.50.300">
    <property type="entry name" value="P-loop containing nucleotide triphosphate hydrolases"/>
    <property type="match status" value="1"/>
</dbReference>
<dbReference type="HAMAP" id="MF_00215">
    <property type="entry name" value="Pantothen_kinase_1"/>
    <property type="match status" value="1"/>
</dbReference>
<dbReference type="InterPro" id="IPR027417">
    <property type="entry name" value="P-loop_NTPase"/>
</dbReference>
<dbReference type="InterPro" id="IPR004566">
    <property type="entry name" value="PanK"/>
</dbReference>
<dbReference type="InterPro" id="IPR006083">
    <property type="entry name" value="PRK/URK"/>
</dbReference>
<dbReference type="NCBIfam" id="TIGR00554">
    <property type="entry name" value="panK_bact"/>
    <property type="match status" value="1"/>
</dbReference>
<dbReference type="PANTHER" id="PTHR10285">
    <property type="entry name" value="URIDINE KINASE"/>
    <property type="match status" value="1"/>
</dbReference>
<dbReference type="Pfam" id="PF00485">
    <property type="entry name" value="PRK"/>
    <property type="match status" value="1"/>
</dbReference>
<dbReference type="PIRSF" id="PIRSF000545">
    <property type="entry name" value="Pantothenate_kin"/>
    <property type="match status" value="1"/>
</dbReference>
<dbReference type="SUPFAM" id="SSF52540">
    <property type="entry name" value="P-loop containing nucleoside triphosphate hydrolases"/>
    <property type="match status" value="1"/>
</dbReference>
<feature type="chain" id="PRO_1000189612" description="Pantothenate kinase">
    <location>
        <begin position="1"/>
        <end position="316"/>
    </location>
</feature>
<feature type="binding site" evidence="1">
    <location>
        <begin position="95"/>
        <end position="102"/>
    </location>
    <ligand>
        <name>ATP</name>
        <dbReference type="ChEBI" id="CHEBI:30616"/>
    </ligand>
</feature>
<sequence>MSIKEQTLMTPYLQFDRNQWAALRDSVPMTLSEDEIARLKGINEDLSLEEVAEIYLPLSRLLNFYISSNLRRQAVLEQFLGTNGQRIPYIISIAGSVAVGKSTTARVLQALLSRWPEHRRVELITTDGFLHPNQVLKERGLMKKKGFPESYDMHRLVKFVSDLKSGVPNVTAPVYSHLIYDVIPDGDKTVVQPDILILEGLNVLQSGMDYPHDPHHVFVSDFVDFSIYVDAPEDLLQTWYINRFLKFREGAFTDPDSYFHNYAKLTKEEAIKTAMTLWKEINWLNLKQNILPTRERASLILTKSANHAVEEVRLRK</sequence>
<gene>
    <name evidence="1" type="primary">coaA</name>
    <name type="ordered locus">ECS88_4438</name>
</gene>